<keyword id="KW-1015">Disulfide bond</keyword>
<keyword id="KW-0378">Hydrolase</keyword>
<keyword id="KW-0645">Protease</keyword>
<keyword id="KW-0720">Serine protease</keyword>
<keyword id="KW-0732">Signal</keyword>
<keyword id="KW-0865">Zymogen</keyword>
<feature type="signal peptide" evidence="2">
    <location>
        <begin position="1"/>
        <end position="41"/>
    </location>
</feature>
<feature type="propeptide" id="PRO_0000028303" description="Activation peptide">
    <location>
        <begin position="42"/>
        <end position="45"/>
    </location>
</feature>
<feature type="chain" id="PRO_0000028304" description="Trypsin-like protease">
    <location>
        <begin position="46"/>
        <end position="268"/>
    </location>
</feature>
<feature type="domain" description="Peptidase S1" evidence="3">
    <location>
        <begin position="46"/>
        <end position="266"/>
    </location>
</feature>
<feature type="active site" description="Charge relay system" evidence="1">
    <location>
        <position position="82"/>
    </location>
</feature>
<feature type="active site" description="Charge relay system" evidence="1">
    <location>
        <position position="127"/>
    </location>
</feature>
<feature type="active site" description="Charge relay system" evidence="1">
    <location>
        <position position="217"/>
    </location>
</feature>
<feature type="site" description="Required for specificity" evidence="1">
    <location>
        <position position="211"/>
    </location>
</feature>
<feature type="disulfide bond" evidence="3">
    <location>
        <begin position="67"/>
        <end position="83"/>
    </location>
</feature>
<feature type="disulfide bond" evidence="3">
    <location>
        <begin position="187"/>
        <end position="202"/>
    </location>
</feature>
<feature type="disulfide bond" evidence="3">
    <location>
        <begin position="213"/>
        <end position="242"/>
    </location>
</feature>
<comment type="function">
    <text>Protease that shows preferential cleavage after Arg and Lys residues.</text>
</comment>
<comment type="similarity">
    <text evidence="3">Belongs to the peptidase S1 family.</text>
</comment>
<dbReference type="EC" id="3.4.21.-"/>
<dbReference type="EMBL" id="U13770">
    <property type="protein sequence ID" value="AAA21336.1"/>
    <property type="molecule type" value="Genomic_DNA"/>
</dbReference>
<dbReference type="SMR" id="Q54179"/>
<dbReference type="STRING" id="1907.SGLAU_09150"/>
<dbReference type="MEROPS" id="S01.101"/>
<dbReference type="eggNOG" id="COG5640">
    <property type="taxonomic scope" value="Bacteria"/>
</dbReference>
<dbReference type="GO" id="GO:0004252">
    <property type="term" value="F:serine-type endopeptidase activity"/>
    <property type="evidence" value="ECO:0007669"/>
    <property type="project" value="InterPro"/>
</dbReference>
<dbReference type="GO" id="GO:0006508">
    <property type="term" value="P:proteolysis"/>
    <property type="evidence" value="ECO:0007669"/>
    <property type="project" value="UniProtKB-KW"/>
</dbReference>
<dbReference type="CDD" id="cd00190">
    <property type="entry name" value="Tryp_SPc"/>
    <property type="match status" value="1"/>
</dbReference>
<dbReference type="FunFam" id="2.40.10.10:FF:000002">
    <property type="entry name" value="Transmembrane protease serine"/>
    <property type="match status" value="1"/>
</dbReference>
<dbReference type="Gene3D" id="2.40.10.10">
    <property type="entry name" value="Trypsin-like serine proteases"/>
    <property type="match status" value="2"/>
</dbReference>
<dbReference type="InterPro" id="IPR009003">
    <property type="entry name" value="Peptidase_S1_PA"/>
</dbReference>
<dbReference type="InterPro" id="IPR043504">
    <property type="entry name" value="Peptidase_S1_PA_chymotrypsin"/>
</dbReference>
<dbReference type="InterPro" id="IPR001314">
    <property type="entry name" value="Peptidase_S1A"/>
</dbReference>
<dbReference type="InterPro" id="IPR001254">
    <property type="entry name" value="Trypsin_dom"/>
</dbReference>
<dbReference type="InterPro" id="IPR018114">
    <property type="entry name" value="TRYPSIN_HIS"/>
</dbReference>
<dbReference type="InterPro" id="IPR033116">
    <property type="entry name" value="TRYPSIN_SER"/>
</dbReference>
<dbReference type="PANTHER" id="PTHR24252">
    <property type="entry name" value="ACROSIN-RELATED"/>
    <property type="match status" value="1"/>
</dbReference>
<dbReference type="PANTHER" id="PTHR24252:SF7">
    <property type="entry name" value="HYALIN"/>
    <property type="match status" value="1"/>
</dbReference>
<dbReference type="Pfam" id="PF00089">
    <property type="entry name" value="Trypsin"/>
    <property type="match status" value="1"/>
</dbReference>
<dbReference type="PRINTS" id="PR00722">
    <property type="entry name" value="CHYMOTRYPSIN"/>
</dbReference>
<dbReference type="SMART" id="SM00020">
    <property type="entry name" value="Tryp_SPc"/>
    <property type="match status" value="1"/>
</dbReference>
<dbReference type="SUPFAM" id="SSF50494">
    <property type="entry name" value="Trypsin-like serine proteases"/>
    <property type="match status" value="1"/>
</dbReference>
<dbReference type="PROSITE" id="PS50240">
    <property type="entry name" value="TRYPSIN_DOM"/>
    <property type="match status" value="1"/>
</dbReference>
<dbReference type="PROSITE" id="PS00134">
    <property type="entry name" value="TRYPSIN_HIS"/>
    <property type="match status" value="1"/>
</dbReference>
<dbReference type="PROSITE" id="PS00135">
    <property type="entry name" value="TRYPSIN_SER"/>
    <property type="match status" value="1"/>
</dbReference>
<proteinExistence type="inferred from homology"/>
<accession>Q54179</accession>
<reference key="1">
    <citation type="submission" date="1994-08" db="EMBL/GenBank/DDBJ databases">
        <title>Cloning, partial characterization and nucleotide sequence of a trypsin-like protease gene from Streptomyces glaucescens.</title>
        <authorList>
            <person name="Hintermann G."/>
        </authorList>
    </citation>
    <scope>NUCLEOTIDE SEQUENCE [GENOMIC DNA]</scope>
    <source>
        <strain>DSM 40716 / ETH 22794 / Tue 49</strain>
    </source>
</reference>
<name>TRYP_STRGA</name>
<organism>
    <name type="scientific">Streptomyces glaucescens</name>
    <dbReference type="NCBI Taxonomy" id="1907"/>
    <lineage>
        <taxon>Bacteria</taxon>
        <taxon>Bacillati</taxon>
        <taxon>Actinomycetota</taxon>
        <taxon>Actinomycetes</taxon>
        <taxon>Kitasatosporales</taxon>
        <taxon>Streptomycetaceae</taxon>
        <taxon>Streptomyces</taxon>
    </lineage>
</organism>
<sequence>MTHTTTIAAKRGGLALAKKAAAAGAVALAVASLQPVSAAHAADARVIGGKPAAQNEFPFMVHLSMGCGGALYKKDIVLTAAHCMDGSGNNTRITVTAGVADLNSSGAIKVKSTKVKVAPGYDGVGKDWALIKLAKPIDRPTLKIATTAKYNRGTFTIAGWGDVREGAGTGTTKLQKANVPFVSDRACKWHYGNRLVPKQELCAGYASGGIDTCQGDSGGPMFRKDDAGKWIQVGIVSWGDGCARSGVPGVYTEVSTFAKDIAKAASAL</sequence>
<protein>
    <recommendedName>
        <fullName>Trypsin-like protease</fullName>
        <ecNumber>3.4.21.-</ecNumber>
    </recommendedName>
</protein>
<evidence type="ECO:0000250" key="1"/>
<evidence type="ECO:0000255" key="2"/>
<evidence type="ECO:0000255" key="3">
    <source>
        <dbReference type="PROSITE-ProRule" id="PRU00274"/>
    </source>
</evidence>